<evidence type="ECO:0000255" key="1">
    <source>
        <dbReference type="HAMAP-Rule" id="MF_00530"/>
    </source>
</evidence>
<feature type="chain" id="PRO_0000265897" description="ATP synthase epsilon chain">
    <location>
        <begin position="1"/>
        <end position="140"/>
    </location>
</feature>
<comment type="function">
    <text evidence="1">Produces ATP from ADP in the presence of a proton gradient across the membrane.</text>
</comment>
<comment type="subunit">
    <text>F-type ATPases have 2 components, CF(1) - the catalytic core - and CF(0) - the membrane proton channel. CF(1) has five subunits: alpha(3), beta(3), gamma(1), delta(1), epsilon(1). CF(0) has three main subunits: a, b and c.</text>
</comment>
<comment type="subcellular location">
    <subcellularLocation>
        <location evidence="1">Cell inner membrane</location>
        <topology evidence="1">Peripheral membrane protein</topology>
    </subcellularLocation>
</comment>
<comment type="similarity">
    <text evidence="1">Belongs to the ATPase epsilon chain family.</text>
</comment>
<organism>
    <name type="scientific">Sodalis glossinidius (strain morsitans)</name>
    <dbReference type="NCBI Taxonomy" id="343509"/>
    <lineage>
        <taxon>Bacteria</taxon>
        <taxon>Pseudomonadati</taxon>
        <taxon>Pseudomonadota</taxon>
        <taxon>Gammaproteobacteria</taxon>
        <taxon>Enterobacterales</taxon>
        <taxon>Bruguierivoracaceae</taxon>
        <taxon>Sodalis</taxon>
    </lineage>
</organism>
<gene>
    <name evidence="1" type="primary">atpC</name>
    <name type="ordered locus">SG2415</name>
</gene>
<reference key="1">
    <citation type="journal article" date="2006" name="Genome Res.">
        <title>Massive genome erosion and functional adaptations provide insights into the symbiotic lifestyle of Sodalis glossinidius in the tsetse host.</title>
        <authorList>
            <person name="Toh H."/>
            <person name="Weiss B.L."/>
            <person name="Perkin S.A.H."/>
            <person name="Yamashita A."/>
            <person name="Oshima K."/>
            <person name="Hattori M."/>
            <person name="Aksoy S."/>
        </authorList>
    </citation>
    <scope>NUCLEOTIDE SEQUENCE [LARGE SCALE GENOMIC DNA]</scope>
    <source>
        <strain>morsitans</strain>
    </source>
</reference>
<keyword id="KW-0066">ATP synthesis</keyword>
<keyword id="KW-0997">Cell inner membrane</keyword>
<keyword id="KW-1003">Cell membrane</keyword>
<keyword id="KW-0139">CF(1)</keyword>
<keyword id="KW-0375">Hydrogen ion transport</keyword>
<keyword id="KW-0406">Ion transport</keyword>
<keyword id="KW-0472">Membrane</keyword>
<keyword id="KW-0813">Transport</keyword>
<name>ATPE_SODGM</name>
<protein>
    <recommendedName>
        <fullName evidence="1">ATP synthase epsilon chain</fullName>
    </recommendedName>
    <alternativeName>
        <fullName evidence="1">ATP synthase F1 sector epsilon subunit</fullName>
    </alternativeName>
    <alternativeName>
        <fullName evidence="1">F-ATPase epsilon subunit</fullName>
    </alternativeName>
</protein>
<sequence length="140" mass="15216">MAAKIYHLDVVSAEKQMFSGLVEKIQVTGSEGELGIFPGHAPLLTAIKPGMVRIVKEHGNEEYIYLSGGVLEVQPSTVTVLADTAIRGEDLDEARAMESKRKAEEHINNSHGDIDYAQASAELSKALAKLRVIELTKKAM</sequence>
<proteinExistence type="inferred from homology"/>
<accession>Q2NQ85</accession>
<dbReference type="EMBL" id="AP008232">
    <property type="protein sequence ID" value="BAE75690.1"/>
    <property type="molecule type" value="Genomic_DNA"/>
</dbReference>
<dbReference type="RefSeq" id="WP_011412220.1">
    <property type="nucleotide sequence ID" value="NC_007712.1"/>
</dbReference>
<dbReference type="SMR" id="Q2NQ85"/>
<dbReference type="STRING" id="343509.SG2415"/>
<dbReference type="KEGG" id="sgl:SG2415"/>
<dbReference type="eggNOG" id="COG0355">
    <property type="taxonomic scope" value="Bacteria"/>
</dbReference>
<dbReference type="HOGENOM" id="CLU_084338_2_0_6"/>
<dbReference type="OrthoDB" id="9791445at2"/>
<dbReference type="BioCyc" id="SGLO343509:SGP1_RS21890-MONOMER"/>
<dbReference type="Proteomes" id="UP000001932">
    <property type="component" value="Chromosome"/>
</dbReference>
<dbReference type="GO" id="GO:0005886">
    <property type="term" value="C:plasma membrane"/>
    <property type="evidence" value="ECO:0007669"/>
    <property type="project" value="UniProtKB-SubCell"/>
</dbReference>
<dbReference type="GO" id="GO:0045259">
    <property type="term" value="C:proton-transporting ATP synthase complex"/>
    <property type="evidence" value="ECO:0007669"/>
    <property type="project" value="UniProtKB-KW"/>
</dbReference>
<dbReference type="GO" id="GO:0005524">
    <property type="term" value="F:ATP binding"/>
    <property type="evidence" value="ECO:0007669"/>
    <property type="project" value="UniProtKB-UniRule"/>
</dbReference>
<dbReference type="GO" id="GO:0046933">
    <property type="term" value="F:proton-transporting ATP synthase activity, rotational mechanism"/>
    <property type="evidence" value="ECO:0007669"/>
    <property type="project" value="UniProtKB-UniRule"/>
</dbReference>
<dbReference type="CDD" id="cd12152">
    <property type="entry name" value="F1-ATPase_delta"/>
    <property type="match status" value="1"/>
</dbReference>
<dbReference type="FunFam" id="1.20.5.440:FF:000001">
    <property type="entry name" value="ATP synthase epsilon chain"/>
    <property type="match status" value="1"/>
</dbReference>
<dbReference type="FunFam" id="2.60.15.10:FF:000001">
    <property type="entry name" value="ATP synthase epsilon chain"/>
    <property type="match status" value="1"/>
</dbReference>
<dbReference type="Gene3D" id="1.20.5.440">
    <property type="entry name" value="ATP synthase delta/epsilon subunit, C-terminal domain"/>
    <property type="match status" value="1"/>
</dbReference>
<dbReference type="Gene3D" id="2.60.15.10">
    <property type="entry name" value="F0F1 ATP synthase delta/epsilon subunit, N-terminal"/>
    <property type="match status" value="1"/>
</dbReference>
<dbReference type="HAMAP" id="MF_00530">
    <property type="entry name" value="ATP_synth_epsil_bac"/>
    <property type="match status" value="1"/>
</dbReference>
<dbReference type="InterPro" id="IPR036794">
    <property type="entry name" value="ATP_F1_dsu/esu_C_sf"/>
</dbReference>
<dbReference type="InterPro" id="IPR001469">
    <property type="entry name" value="ATP_synth_F1_dsu/esu"/>
</dbReference>
<dbReference type="InterPro" id="IPR020546">
    <property type="entry name" value="ATP_synth_F1_dsu/esu_N"/>
</dbReference>
<dbReference type="InterPro" id="IPR020547">
    <property type="entry name" value="ATP_synth_F1_esu_C"/>
</dbReference>
<dbReference type="InterPro" id="IPR036771">
    <property type="entry name" value="ATPsynth_dsu/esu_N"/>
</dbReference>
<dbReference type="NCBIfam" id="TIGR01216">
    <property type="entry name" value="ATP_synt_epsi"/>
    <property type="match status" value="1"/>
</dbReference>
<dbReference type="NCBIfam" id="NF001847">
    <property type="entry name" value="PRK00571.1-4"/>
    <property type="match status" value="1"/>
</dbReference>
<dbReference type="PANTHER" id="PTHR13822">
    <property type="entry name" value="ATP SYNTHASE DELTA/EPSILON CHAIN"/>
    <property type="match status" value="1"/>
</dbReference>
<dbReference type="PANTHER" id="PTHR13822:SF10">
    <property type="entry name" value="ATP SYNTHASE EPSILON CHAIN, CHLOROPLASTIC"/>
    <property type="match status" value="1"/>
</dbReference>
<dbReference type="Pfam" id="PF00401">
    <property type="entry name" value="ATP-synt_DE"/>
    <property type="match status" value="1"/>
</dbReference>
<dbReference type="Pfam" id="PF02823">
    <property type="entry name" value="ATP-synt_DE_N"/>
    <property type="match status" value="1"/>
</dbReference>
<dbReference type="SUPFAM" id="SSF46604">
    <property type="entry name" value="Epsilon subunit of F1F0-ATP synthase C-terminal domain"/>
    <property type="match status" value="1"/>
</dbReference>
<dbReference type="SUPFAM" id="SSF51344">
    <property type="entry name" value="Epsilon subunit of F1F0-ATP synthase N-terminal domain"/>
    <property type="match status" value="1"/>
</dbReference>